<accession>Q4JSF9</accession>
<comment type="function">
    <text evidence="1">Binds together with bS18 to 16S ribosomal RNA.</text>
</comment>
<comment type="similarity">
    <text evidence="1">Belongs to the bacterial ribosomal protein bS6 family.</text>
</comment>
<gene>
    <name evidence="1" type="primary">rpsF</name>
    <name type="ordered locus">jk2066</name>
</gene>
<reference key="1">
    <citation type="journal article" date="2005" name="J. Bacteriol.">
        <title>Complete genome sequence and analysis of the multiresistant nosocomial pathogen Corynebacterium jeikeium K411, a lipid-requiring bacterium of the human skin flora.</title>
        <authorList>
            <person name="Tauch A."/>
            <person name="Kaiser O."/>
            <person name="Hain T."/>
            <person name="Goesmann A."/>
            <person name="Weisshaar B."/>
            <person name="Albersmeier A."/>
            <person name="Bekel T."/>
            <person name="Bischoff N."/>
            <person name="Brune I."/>
            <person name="Chakraborty T."/>
            <person name="Kalinowski J."/>
            <person name="Meyer F."/>
            <person name="Rupp O."/>
            <person name="Schneiker S."/>
            <person name="Viehoever P."/>
            <person name="Puehler A."/>
        </authorList>
    </citation>
    <scope>NUCLEOTIDE SEQUENCE [LARGE SCALE GENOMIC DNA]</scope>
    <source>
        <strain>K411</strain>
    </source>
</reference>
<feature type="chain" id="PRO_0000229535" description="Small ribosomal subunit protein bS6">
    <location>
        <begin position="1"/>
        <end position="95"/>
    </location>
</feature>
<name>RS6_CORJK</name>
<organism>
    <name type="scientific">Corynebacterium jeikeium (strain K411)</name>
    <dbReference type="NCBI Taxonomy" id="306537"/>
    <lineage>
        <taxon>Bacteria</taxon>
        <taxon>Bacillati</taxon>
        <taxon>Actinomycetota</taxon>
        <taxon>Actinomycetes</taxon>
        <taxon>Mycobacteriales</taxon>
        <taxon>Corynebacteriaceae</taxon>
        <taxon>Corynebacterium</taxon>
    </lineage>
</organism>
<dbReference type="EMBL" id="CR931997">
    <property type="protein sequence ID" value="CAI38248.1"/>
    <property type="molecule type" value="Genomic_DNA"/>
</dbReference>
<dbReference type="RefSeq" id="WP_011274321.1">
    <property type="nucleotide sequence ID" value="NC_007164.1"/>
</dbReference>
<dbReference type="SMR" id="Q4JSF9"/>
<dbReference type="STRING" id="306537.jk2066"/>
<dbReference type="GeneID" id="92739699"/>
<dbReference type="KEGG" id="cjk:jk2066"/>
<dbReference type="PATRIC" id="fig|306537.10.peg.2097"/>
<dbReference type="eggNOG" id="COG0360">
    <property type="taxonomic scope" value="Bacteria"/>
</dbReference>
<dbReference type="HOGENOM" id="CLU_113441_5_3_11"/>
<dbReference type="OrthoDB" id="9812702at2"/>
<dbReference type="Proteomes" id="UP000000545">
    <property type="component" value="Chromosome"/>
</dbReference>
<dbReference type="GO" id="GO:0005737">
    <property type="term" value="C:cytoplasm"/>
    <property type="evidence" value="ECO:0007669"/>
    <property type="project" value="UniProtKB-ARBA"/>
</dbReference>
<dbReference type="GO" id="GO:1990904">
    <property type="term" value="C:ribonucleoprotein complex"/>
    <property type="evidence" value="ECO:0007669"/>
    <property type="project" value="UniProtKB-KW"/>
</dbReference>
<dbReference type="GO" id="GO:0005840">
    <property type="term" value="C:ribosome"/>
    <property type="evidence" value="ECO:0007669"/>
    <property type="project" value="UniProtKB-KW"/>
</dbReference>
<dbReference type="GO" id="GO:0070181">
    <property type="term" value="F:small ribosomal subunit rRNA binding"/>
    <property type="evidence" value="ECO:0007669"/>
    <property type="project" value="TreeGrafter"/>
</dbReference>
<dbReference type="GO" id="GO:0003735">
    <property type="term" value="F:structural constituent of ribosome"/>
    <property type="evidence" value="ECO:0007669"/>
    <property type="project" value="InterPro"/>
</dbReference>
<dbReference type="GO" id="GO:0006412">
    <property type="term" value="P:translation"/>
    <property type="evidence" value="ECO:0007669"/>
    <property type="project" value="UniProtKB-UniRule"/>
</dbReference>
<dbReference type="CDD" id="cd00473">
    <property type="entry name" value="bS6"/>
    <property type="match status" value="1"/>
</dbReference>
<dbReference type="FunFam" id="3.30.70.60:FF:000002">
    <property type="entry name" value="30S ribosomal protein S6"/>
    <property type="match status" value="1"/>
</dbReference>
<dbReference type="Gene3D" id="3.30.70.60">
    <property type="match status" value="1"/>
</dbReference>
<dbReference type="HAMAP" id="MF_00360">
    <property type="entry name" value="Ribosomal_bS6"/>
    <property type="match status" value="1"/>
</dbReference>
<dbReference type="InterPro" id="IPR000529">
    <property type="entry name" value="Ribosomal_bS6"/>
</dbReference>
<dbReference type="InterPro" id="IPR035980">
    <property type="entry name" value="Ribosomal_bS6_sf"/>
</dbReference>
<dbReference type="InterPro" id="IPR020814">
    <property type="entry name" value="Ribosomal_S6_plastid/chlpt"/>
</dbReference>
<dbReference type="InterPro" id="IPR014717">
    <property type="entry name" value="Transl_elong_EF1B/ribsomal_bS6"/>
</dbReference>
<dbReference type="NCBIfam" id="TIGR00166">
    <property type="entry name" value="S6"/>
    <property type="match status" value="1"/>
</dbReference>
<dbReference type="PANTHER" id="PTHR21011">
    <property type="entry name" value="MITOCHONDRIAL 28S RIBOSOMAL PROTEIN S6"/>
    <property type="match status" value="1"/>
</dbReference>
<dbReference type="PANTHER" id="PTHR21011:SF1">
    <property type="entry name" value="SMALL RIBOSOMAL SUBUNIT PROTEIN BS6M"/>
    <property type="match status" value="1"/>
</dbReference>
<dbReference type="Pfam" id="PF01250">
    <property type="entry name" value="Ribosomal_S6"/>
    <property type="match status" value="1"/>
</dbReference>
<dbReference type="SUPFAM" id="SSF54995">
    <property type="entry name" value="Ribosomal protein S6"/>
    <property type="match status" value="1"/>
</dbReference>
<keyword id="KW-1185">Reference proteome</keyword>
<keyword id="KW-0687">Ribonucleoprotein</keyword>
<keyword id="KW-0689">Ribosomal protein</keyword>
<keyword id="KW-0694">RNA-binding</keyword>
<keyword id="KW-0699">rRNA-binding</keyword>
<proteinExistence type="inferred from homology"/>
<protein>
    <recommendedName>
        <fullName evidence="1">Small ribosomal subunit protein bS6</fullName>
    </recommendedName>
    <alternativeName>
        <fullName evidence="2">30S ribosomal protein S6</fullName>
    </alternativeName>
</protein>
<sequence>MRQYEMMIIIDPSQDERTVAPSLDKYLDIVRKENGSVEKVDIWGKRRLEYPINKKDEGIYVVLDLKCESATVLEIDRLLNINDQILRTKVLRKDQ</sequence>
<evidence type="ECO:0000255" key="1">
    <source>
        <dbReference type="HAMAP-Rule" id="MF_00360"/>
    </source>
</evidence>
<evidence type="ECO:0000305" key="2"/>